<protein>
    <recommendedName>
        <fullName evidence="1">Ribonucleoside-diphosphate reductase large subunit</fullName>
        <shortName evidence="1">R1</shortName>
        <ecNumber evidence="1">1.17.4.1</ecNumber>
    </recommendedName>
    <alternativeName>
        <fullName evidence="1">Ribonucleotide reductase large subunit</fullName>
    </alternativeName>
</protein>
<reference key="1">
    <citation type="journal article" date="2000" name="J. Virol.">
        <title>The genome of a very virulent Marek's disease virus.</title>
        <authorList>
            <person name="Tulman E.R."/>
            <person name="Afonso C.L."/>
            <person name="Lu Z."/>
            <person name="Zsak L."/>
            <person name="Rock D.L."/>
            <person name="Kutish G.F."/>
        </authorList>
    </citation>
    <scope>NUCLEOTIDE SEQUENCE [LARGE SCALE GENOMIC DNA]</scope>
</reference>
<gene>
    <name evidence="1" type="primary">RIR1</name>
    <name type="ordered locus">MDV052</name>
</gene>
<sequence length="822" mass="92821">MDHSDVYEPYTFSGKHHVRMYDFSKLTPMWNKDASTPPRKFADMHIASTVAMELYNIERELLNMGHLSGMETMMVDVRKSPEMIPSTINMRDHITRLVNKMKPICRFDERLYSLCGELVHLRIELREVPLDTWLLSKKLNLKYEVVDNIRRYRAHIEMDMLRFYGSIHPWLKRLGLQSALKYEEYLVELEDGKKESLCQFFVRLAAAAATEASMKKPFMTTLTTGVANWRTTFTTFFLALANQLFVPSTPCMLFLGREGTSTASCYLMDPRTNNTQDTLKAITEDVVPHLLARGGIGISLQHLNGKFGLMHVMKVLDSLVMAANVNESRPTGICVYLEPWHADIMSALNMRGMVAAEESRRCDNVFLALWSCDLLFKRYLRHVNGEKNVIWTLFDSRASILTKLHSEEFEKEYERLESEGLGVASIPIRDMMFAIIKSAASTGSPFILFKDACNRHYITNTQGDAIAGSNLCTEIIQKTDANTNGVCSLASINLARCVRNIDGNRQFDFDALRYAVRLATVFVNAIMEGSDVPTEKSHSGRERNRSMGIGVQGFHTAFLSMGLDLCDERARSLNKLIFEFMLLEAMTVSCEFCERGLPPFADFSNSYYARGRLHFDGWANVELAAVEEWNMLRDRIVSAGLYNAQFIALMPTAASAQVTEVSEGFSPLFSNMFSKVTSTGELLRPNIQLMEELRTIYLDNENQRLATIAALESANWNIQTALGNKPECHSLLKYKTAFDYDQALLIDLCSDRAPFVDQSQSMTLFITETADGTLLASRVMNLLLHAYKAGLKTGMYYCKIRKATNAGVFCGDGELTCSSCVL</sequence>
<evidence type="ECO:0000255" key="1">
    <source>
        <dbReference type="HAMAP-Rule" id="MF_04026"/>
    </source>
</evidence>
<organismHost>
    <name type="scientific">Gallus gallus</name>
    <name type="common">Chicken</name>
    <dbReference type="NCBI Taxonomy" id="9031"/>
</organismHost>
<comment type="function">
    <text evidence="1">Ribonucleoside-diphosphate reductase holoenzyme provides the precursors necessary for viral DNA synthesis. Allows virus growth in non-dividing cells, as well as reactivation from latency in infected hosts. Catalyzes the biosynthesis of deoxyribonucleotides from the corresponding ribonucleotides.</text>
</comment>
<comment type="catalytic activity">
    <reaction evidence="1">
        <text>a 2'-deoxyribonucleoside 5'-diphosphate + [thioredoxin]-disulfide + H2O = a ribonucleoside 5'-diphosphate + [thioredoxin]-dithiol</text>
        <dbReference type="Rhea" id="RHEA:23252"/>
        <dbReference type="Rhea" id="RHEA-COMP:10698"/>
        <dbReference type="Rhea" id="RHEA-COMP:10700"/>
        <dbReference type="ChEBI" id="CHEBI:15377"/>
        <dbReference type="ChEBI" id="CHEBI:29950"/>
        <dbReference type="ChEBI" id="CHEBI:50058"/>
        <dbReference type="ChEBI" id="CHEBI:57930"/>
        <dbReference type="ChEBI" id="CHEBI:73316"/>
        <dbReference type="EC" id="1.17.4.1"/>
    </reaction>
</comment>
<comment type="subunit">
    <text evidence="1">Heterotetramer composed of a homodimer of the large subunit (R1) and a homodimer of the small subunit (R2). Larger multisubunit protein complex are also active, composed of (R1)n(R2)n.</text>
</comment>
<comment type="similarity">
    <text evidence="1">Belongs to the ribonucleoside diphosphate reductase large chain family.</text>
</comment>
<organism>
    <name type="scientific">Gallid herpesvirus 2 (strain Chicken/Md5/ATCC VR-987)</name>
    <name type="common">GaHV-2</name>
    <name type="synonym">Marek's disease herpesvirus type 1</name>
    <dbReference type="NCBI Taxonomy" id="10389"/>
    <lineage>
        <taxon>Viruses</taxon>
        <taxon>Duplodnaviria</taxon>
        <taxon>Heunggongvirae</taxon>
        <taxon>Peploviricota</taxon>
        <taxon>Herviviricetes</taxon>
        <taxon>Herpesvirales</taxon>
        <taxon>Orthoherpesviridae</taxon>
        <taxon>Alphaherpesvirinae</taxon>
        <taxon>Mardivirus</taxon>
        <taxon>Mardivirus gallidalpha2</taxon>
        <taxon>Gallid alphaherpesvirus 2</taxon>
    </lineage>
</organism>
<feature type="chain" id="PRO_0000406420" description="Ribonucleoside-diphosphate reductase large subunit">
    <location>
        <begin position="1"/>
        <end position="822"/>
    </location>
</feature>
<feature type="active site" description="Proton acceptor" evidence="1">
    <location>
        <position position="470"/>
    </location>
</feature>
<feature type="active site" description="Cysteine radical intermediate" evidence="1">
    <location>
        <position position="472"/>
    </location>
</feature>
<feature type="active site" description="Proton acceptor" evidence="1">
    <location>
        <position position="474"/>
    </location>
</feature>
<feature type="binding site" evidence="1">
    <location>
        <position position="249"/>
    </location>
    <ligand>
        <name>substrate</name>
    </ligand>
</feature>
<feature type="binding site" evidence="1">
    <location>
        <begin position="264"/>
        <end position="265"/>
    </location>
    <ligand>
        <name>substrate</name>
    </ligand>
</feature>
<feature type="binding site" evidence="1">
    <location>
        <position position="295"/>
    </location>
    <ligand>
        <name>substrate</name>
    </ligand>
</feature>
<feature type="binding site" evidence="1">
    <location>
        <begin position="470"/>
        <end position="474"/>
    </location>
    <ligand>
        <name>substrate</name>
    </ligand>
</feature>
<feature type="binding site" evidence="1">
    <location>
        <begin position="651"/>
        <end position="655"/>
    </location>
    <ligand>
        <name>substrate</name>
    </ligand>
</feature>
<feature type="site" description="Important for hydrogen atom transfer" evidence="1">
    <location>
        <position position="265"/>
    </location>
</feature>
<feature type="site" description="Important for hydrogen atom transfer" evidence="1">
    <location>
        <position position="487"/>
    </location>
</feature>
<feature type="site" description="Important for electron transfer" evidence="1">
    <location>
        <position position="796"/>
    </location>
</feature>
<feature type="site" description="Important for electron transfer" evidence="1">
    <location>
        <position position="797"/>
    </location>
</feature>
<feature type="site" description="Interacts with thioredoxin/glutaredoxin" evidence="1">
    <location>
        <position position="817"/>
    </location>
</feature>
<feature type="site" description="Interacts with thioredoxin/glutaredoxin" evidence="1">
    <location>
        <position position="820"/>
    </location>
</feature>
<feature type="disulfide bond" description="Redox-active" evidence="1">
    <location>
        <begin position="265"/>
        <end position="487"/>
    </location>
</feature>
<name>RIR1_GAHVM</name>
<accession>Q77MS1</accession>
<dbReference type="EC" id="1.17.4.1" evidence="1"/>
<dbReference type="EMBL" id="AF243438">
    <property type="protein sequence ID" value="AAG14232.1"/>
    <property type="molecule type" value="Genomic_DNA"/>
</dbReference>
<dbReference type="RefSeq" id="YP_001033968.1">
    <property type="nucleotide sequence ID" value="NC_002229.3"/>
</dbReference>
<dbReference type="SMR" id="Q77MS1"/>
<dbReference type="GeneID" id="4811513"/>
<dbReference type="KEGG" id="vg:4811513"/>
<dbReference type="Proteomes" id="UP000008072">
    <property type="component" value="Segment"/>
</dbReference>
<dbReference type="GO" id="GO:0005524">
    <property type="term" value="F:ATP binding"/>
    <property type="evidence" value="ECO:0007669"/>
    <property type="project" value="UniProtKB-UniRule"/>
</dbReference>
<dbReference type="GO" id="GO:0004748">
    <property type="term" value="F:ribonucleoside-diphosphate reductase activity, thioredoxin disulfide as acceptor"/>
    <property type="evidence" value="ECO:0007669"/>
    <property type="project" value="UniProtKB-UniRule"/>
</dbReference>
<dbReference type="GO" id="GO:0009263">
    <property type="term" value="P:deoxyribonucleotide biosynthetic process"/>
    <property type="evidence" value="ECO:0007669"/>
    <property type="project" value="InterPro"/>
</dbReference>
<dbReference type="GO" id="GO:0006260">
    <property type="term" value="P:DNA replication"/>
    <property type="evidence" value="ECO:0007669"/>
    <property type="project" value="UniProtKB-KW"/>
</dbReference>
<dbReference type="GO" id="GO:0016032">
    <property type="term" value="P:viral process"/>
    <property type="evidence" value="ECO:0007669"/>
    <property type="project" value="UniProtKB-UniRule"/>
</dbReference>
<dbReference type="Gene3D" id="3.20.70.20">
    <property type="match status" value="1"/>
</dbReference>
<dbReference type="HAMAP" id="MF_04026">
    <property type="entry name" value="HSV_RIR1"/>
    <property type="match status" value="1"/>
</dbReference>
<dbReference type="InterPro" id="IPR034717">
    <property type="entry name" value="HSV_RIR1"/>
</dbReference>
<dbReference type="InterPro" id="IPR013346">
    <property type="entry name" value="NrdE_NrdA_C"/>
</dbReference>
<dbReference type="InterPro" id="IPR000788">
    <property type="entry name" value="RNR_lg_C"/>
</dbReference>
<dbReference type="InterPro" id="IPR013509">
    <property type="entry name" value="RNR_lsu_N"/>
</dbReference>
<dbReference type="InterPro" id="IPR039718">
    <property type="entry name" value="Rrm1"/>
</dbReference>
<dbReference type="NCBIfam" id="TIGR02506">
    <property type="entry name" value="NrdE_NrdA"/>
    <property type="match status" value="1"/>
</dbReference>
<dbReference type="PANTHER" id="PTHR11573">
    <property type="entry name" value="RIBONUCLEOSIDE-DIPHOSPHATE REDUCTASE LARGE CHAIN"/>
    <property type="match status" value="1"/>
</dbReference>
<dbReference type="PANTHER" id="PTHR11573:SF6">
    <property type="entry name" value="RIBONUCLEOSIDE-DIPHOSPHATE REDUCTASE LARGE SUBUNIT"/>
    <property type="match status" value="1"/>
</dbReference>
<dbReference type="Pfam" id="PF02867">
    <property type="entry name" value="Ribonuc_red_lgC"/>
    <property type="match status" value="1"/>
</dbReference>
<dbReference type="Pfam" id="PF00317">
    <property type="entry name" value="Ribonuc_red_lgN"/>
    <property type="match status" value="1"/>
</dbReference>
<dbReference type="PRINTS" id="PR01183">
    <property type="entry name" value="RIBORDTASEM1"/>
</dbReference>
<dbReference type="SUPFAM" id="SSF51998">
    <property type="entry name" value="PFL-like glycyl radical enzymes"/>
    <property type="match status" value="1"/>
</dbReference>
<dbReference type="PROSITE" id="PS00089">
    <property type="entry name" value="RIBORED_LARGE"/>
    <property type="match status" value="1"/>
</dbReference>
<proteinExistence type="inferred from homology"/>
<keyword id="KW-0067">ATP-binding</keyword>
<keyword id="KW-1015">Disulfide bond</keyword>
<keyword id="KW-0235">DNA replication</keyword>
<keyword id="KW-0244">Early protein</keyword>
<keyword id="KW-0547">Nucleotide-binding</keyword>
<keyword id="KW-0560">Oxidoreductase</keyword>
<keyword id="KW-1185">Reference proteome</keyword>